<name>ENV_HV1J3</name>
<organismHost>
    <name type="scientific">Homo sapiens</name>
    <name type="common">Human</name>
    <dbReference type="NCBI Taxonomy" id="9606"/>
</organismHost>
<protein>
    <recommendedName>
        <fullName evidence="1">Envelope glycoprotein gp160</fullName>
    </recommendedName>
    <alternativeName>
        <fullName evidence="1">Env polyprotein</fullName>
    </alternativeName>
    <component>
        <recommendedName>
            <fullName evidence="1">Surface protein gp120</fullName>
            <shortName evidence="1">SU</shortName>
        </recommendedName>
        <alternativeName>
            <fullName evidence="1">Glycoprotein 120</fullName>
            <shortName evidence="1">gp120</shortName>
        </alternativeName>
    </component>
    <component>
        <recommendedName>
            <fullName evidence="1">Transmembrane protein gp41</fullName>
            <shortName evidence="1">TM</shortName>
        </recommendedName>
        <alternativeName>
            <fullName evidence="1">Glycoprotein 41</fullName>
            <shortName evidence="1">gp41</shortName>
        </alternativeName>
    </component>
</protein>
<organism>
    <name type="scientific">Human immunodeficiency virus type 1 group M subtype B (isolate JH32)</name>
    <name type="common">HIV-1</name>
    <dbReference type="NCBI Taxonomy" id="11694"/>
    <lineage>
        <taxon>Viruses</taxon>
        <taxon>Riboviria</taxon>
        <taxon>Pararnavirae</taxon>
        <taxon>Artverviricota</taxon>
        <taxon>Revtraviricetes</taxon>
        <taxon>Ortervirales</taxon>
        <taxon>Retroviridae</taxon>
        <taxon>Orthoretrovirinae</taxon>
        <taxon>Lentivirus</taxon>
        <taxon>Human immunodeficiency virus type 1</taxon>
    </lineage>
</organism>
<gene>
    <name evidence="1" type="primary">env</name>
</gene>
<keyword id="KW-0002">3D-structure</keyword>
<keyword id="KW-0014">AIDS</keyword>
<keyword id="KW-0053">Apoptosis</keyword>
<keyword id="KW-1165">Clathrin-mediated endocytosis of virus by host</keyword>
<keyword id="KW-0165">Cleavage on pair of basic residues</keyword>
<keyword id="KW-0175">Coiled coil</keyword>
<keyword id="KW-1015">Disulfide bond</keyword>
<keyword id="KW-1170">Fusion of virus membrane with host endosomal membrane</keyword>
<keyword id="KW-1168">Fusion of virus membrane with host membrane</keyword>
<keyword id="KW-0325">Glycoprotein</keyword>
<keyword id="KW-1032">Host cell membrane</keyword>
<keyword id="KW-1039">Host endosome</keyword>
<keyword id="KW-1043">Host membrane</keyword>
<keyword id="KW-0945">Host-virus interaction</keyword>
<keyword id="KW-0449">Lipoprotein</keyword>
<keyword id="KW-0472">Membrane</keyword>
<keyword id="KW-0564">Palmitate</keyword>
<keyword id="KW-0732">Signal</keyword>
<keyword id="KW-0812">Transmembrane</keyword>
<keyword id="KW-1133">Transmembrane helix</keyword>
<keyword id="KW-1161">Viral attachment to host cell</keyword>
<keyword id="KW-0261">Viral envelope protein</keyword>
<keyword id="KW-0899">Viral immunoevasion</keyword>
<keyword id="KW-1162">Viral penetration into host cytoplasm</keyword>
<keyword id="KW-0946">Virion</keyword>
<keyword id="KW-1164">Virus endocytosis by host</keyword>
<keyword id="KW-1160">Virus entry into host cell</keyword>
<accession>P12489</accession>
<comment type="function">
    <molecule>Envelope glycoprotein gp160</molecule>
    <text evidence="1">Oligomerizes in the host endoplasmic reticulum into predominantly trimers. In a second time, gp160 transits in the host Golgi, where glycosylation is completed. The precursor is then proteolytically cleaved in the trans-Golgi and thereby activated by cellular furin or furin-like proteases to produce gp120 and gp41.</text>
</comment>
<comment type="function">
    <molecule>Surface protein gp120</molecule>
    <text evidence="1">Attaches the virus to the host lymphoid cell by binding to the primary receptor CD4. This interaction induces a structural rearrangement creating a high affinity binding site for a chemokine coreceptor like CXCR4 and/or CCR5. Acts as a ligand for CD209/DC-SIGN and CLEC4M/DC-SIGNR, which are respectively found on dendritic cells (DCs), and on endothelial cells of liver sinusoids and lymph node sinuses. These interactions allow capture of viral particles at mucosal surfaces by these cells and subsequent transmission to permissive cells. HIV subverts the migration properties of dendritic cells to gain access to CD4+ T-cells in lymph nodes. Virus transmission to permissive T-cells occurs either in trans (without DCs infection, through viral capture and transmission), or in cis (following DCs productive infection, through the usual CD4-gp120 interaction), thereby inducing a robust infection. In trans infection, bound virions remain infectious over days and it is proposed that they are not degraded, but protected in non-lysosomal acidic organelles within the DCs close to the cell membrane thus contributing to the viral infectious potential during DCs' migration from the periphery to the lymphoid tissues. On arrival at lymphoid tissues, intact virions recycle back to DCs' cell surface allowing virus transmission to CD4+ T-cells.</text>
</comment>
<comment type="function">
    <molecule>Transmembrane protein gp41</molecule>
    <text evidence="1">Acts as a class I viral fusion protein. Under the current model, the protein has at least 3 conformational states: pre-fusion native state, pre-hairpin intermediate state, and post-fusion hairpin state. During fusion of viral and target intracellular membranes, the coiled coil regions (heptad repeats) assume a trimer-of-hairpins structure, positioning the fusion peptide in close proximity to the C-terminal region of the ectodomain. The formation of this structure appears to drive apposition and subsequent fusion of viral and target cell membranes. Complete fusion occurs in host cell endosomes and is dynamin-dependent, however some lipid transfer might occur at the plasma membrane. The virus undergoes clathrin-dependent internalization long before endosomal fusion, thus minimizing the surface exposure of conserved viral epitopes during fusion and reducing the efficacy of inhibitors targeting these epitopes. Membranes fusion leads to delivery of the nucleocapsid into the cytoplasm.</text>
</comment>
<comment type="subunit">
    <molecule>Surface protein gp120</molecule>
    <text evidence="1">The mature envelope protein (Env) consists of a homotrimer of non-covalently associated gp120-gp41 heterodimers. The resulting complex protrudes from the virus surface as a spike. There seems to be as few as 10 spikes on the average virion. Interacts with host CD4, CCR5 and CXCR4. Gp120 also interacts with the C-type lectins CD209/DC-SIGN and CLEC4M/DC-SIGNR (collectively referred to as DC-SIGN(R)). Gp120 and gp41 interact with GalCer. Gp120 interacts with host ITGA4/ITGB7 complex; on CD4+ T-cells, this interaction results in rapid activation of integrin ITGAL/LFA-1, which facilitates efficient cell-to-cell spreading of HIV-1. Gp120 interacts with cell-associated heparan sulfate; this interaction increases virus infectivity on permissive cells and may be involved in infection of CD4- cells.</text>
</comment>
<comment type="subunit">
    <molecule>Transmembrane protein gp41</molecule>
    <text evidence="1">The mature envelope protein (Env) consists of a homotrimer of non-covalently associated gp120-gp41 heterodimers. The resulting complex protrudes from the virus surface as a spike. There seems to be as few as 10 spikes on the average virion.</text>
</comment>
<comment type="subcellular location">
    <molecule>Surface protein gp120</molecule>
    <subcellularLocation>
        <location evidence="1">Virion membrane</location>
        <topology evidence="1">Peripheral membrane protein</topology>
    </subcellularLocation>
    <subcellularLocation>
        <location evidence="1">Host cell membrane</location>
        <topology evidence="1">Peripheral membrane protein</topology>
    </subcellularLocation>
    <subcellularLocation>
        <location evidence="1">Host endosome membrane</location>
        <topology evidence="1">Single-pass type I membrane protein</topology>
    </subcellularLocation>
    <text evidence="1">The surface protein is not anchored to the viral envelope, but associates with the extravirion surface through its binding to TM. It is probably concentrated at the site of budding and incorporated into the virions possibly by contacts between the cytoplasmic tail of Env and the N-terminus of Gag.</text>
</comment>
<comment type="subcellular location">
    <molecule>Transmembrane protein gp41</molecule>
    <subcellularLocation>
        <location evidence="1">Virion membrane</location>
        <topology evidence="1">Single-pass type I membrane protein</topology>
    </subcellularLocation>
    <subcellularLocation>
        <location evidence="1">Host cell membrane</location>
        <topology evidence="1">Single-pass type I membrane protein</topology>
    </subcellularLocation>
    <subcellularLocation>
        <location evidence="1">Host endosome membrane</location>
        <topology evidence="1">Single-pass type I membrane protein</topology>
    </subcellularLocation>
    <text evidence="1">It is probably concentrated at the site of budding and incorporated into the virions possibly by contacts between the cytoplasmic tail of Env and the N-terminus of Gag.</text>
</comment>
<comment type="domain">
    <text evidence="1">Some of the most genetically diverse regions of the viral genome are present in Env. They are called variable regions 1 through 5 (V1 through V5). Coreceptor usage of gp120 is determined mainly by the primary structure of the third variable region (V3) in the outer domain of gp120. The sequence of V3 determines which coreceptor, CCR5 and/or CXCR4 (corresponding to R5/macrophage, X4/T cell and R5X4/T cell and macrophage tropism), is used to trigger the fusion potential of the Env complex, and hence which cells the virus can infect. Binding to CCR5 involves a region adjacent in addition to V3.</text>
</comment>
<comment type="domain">
    <text evidence="1">The membrane proximal external region (MPER) present in gp41 is a tryptophan-rich region recognized by the antibodies 2F5, Z13, and 4E10. MPER seems to play a role in fusion.</text>
</comment>
<comment type="domain">
    <text evidence="1">The 17 amino acids long immunosuppressive region is present in many retroviral envelope proteins. Synthetic peptides derived from this relatively conserved sequence inhibit immune function in vitro and in vivo.</text>
</comment>
<comment type="domain">
    <text evidence="1">The YXXL motif is involved in determining the exact site of viral release at the surface of infected mononuclear cells and promotes endocytosis. YXXL and di-leucine endocytosis motifs interact directly or indirectly with the clathrin adapter complexes, opperate independently, and their activities are not additive.</text>
</comment>
<comment type="domain">
    <text evidence="1">The CD4-binding region is targeted by the antibody b12.</text>
</comment>
<comment type="PTM">
    <text evidence="1">Highly glycosylated by host. The high number of glycan on the protein is reffered to as 'glycan shield' because it contributes to hide protein sequence from adaptive immune system.</text>
</comment>
<comment type="PTM">
    <text evidence="1">Palmitoylation of the transmembrane protein and of Env polyprotein (prior to its proteolytic cleavage) is essential for their association with host cell membrane lipid rafts. Palmitoylation is therefore required for envelope trafficking to classical lipid rafts, but not for viral replication.</text>
</comment>
<comment type="PTM">
    <text evidence="1">Specific enzymatic cleavages in vivo yield mature proteins. Envelope glycoproteins are synthesized as an inactive precursor that is heavily N-glycosylated and processed likely by host cell furin in the Golgi to yield the mature SU and TM proteins. The cleavage site between SU and TM requires the minimal sequence [KR]-X-[KR]-R. About 2 of the 9 disulfide bonds of gp41 are reduced by P4HB/PDI, following binding to CD4 receptor.</text>
</comment>
<comment type="miscellaneous">
    <text evidence="1">Inhibitors targeting HIV-1 viral envelope proteins are used as antiretroviral drugs. Attachment of virions to the cell surface via non-specific interactions and CD4 binding can be blocked by inhibitors that include cyanovirin-N, cyclotriazadisulfonamide analogs, PRO 2000, TNX 355 and PRO 542. In addition, BMS 806 can block CD4-induced conformational changes. Env interactions with the coreceptor molecules can be targeted by CCR5 antagonists including SCH-D, maraviroc (UK 427857) and aplaviroc (GW 873140), and the CXCR4 antagonist AMD 070. Fusion of viral and cellular membranes can be inhibited by peptides such as enfuvirtide and tifuvirtide (T 1249). Resistance to inhibitors associated with mutations in Env are observed. Most of the time, single mutations confer only a modest reduction in drug susceptibility. Combination of several mutations is usually required to develop a high-level drug resistance.</text>
</comment>
<comment type="miscellaneous">
    <text evidence="1">HIV-1 lineages are divided in three main groups, M (for Major), O (for Outlier), and N (for New, or Non-M, Non-O). The vast majority of strains found worldwide belong to the group M. Group O seems to be endemic to and largely confined to Cameroon and neighboring countries in West Central Africa, where these viruses represent a small minority of HIV-1 strains. The group N is represented by a limited number of isolates from Cameroonian persons. The group M is further subdivided in 9 clades or subtypes (A to D, F to H, J and K).</text>
</comment>
<comment type="similarity">
    <text evidence="1">Belongs to the HIV-1 env protein family.</text>
</comment>
<comment type="online information" name="hivdb">
    <link uri="https://hivdb.stanford.edu"/>
    <text>HIV drug resistance database</text>
</comment>
<comment type="online information" name="HIV drug resistance mutations">
    <link uri="https://www.iasusa.org/hiv-drug-resistance/hiv-drug-resistance-mutations/"/>
</comment>
<sequence>MRVKGIRKNYQHLWRWGTMLLGILMICSAAEQLWVTVYYGVPVWKEAATTLFCASDAKAYDTEVHNVWATHACVPTDPNPQEVVLENVTEKFNMWKNNMVEQMHEDIISLWDQSLKPCVKLTPLCVTLNCIDWGNDTSPNATNTTSSGGEKMEKGEMKNCSFNITTSIRDKVQKEHALFYKHDVVPINNSTKDNIKNDNSTRYRLISCNTSVITQACPKISFEPIPIHYCAPAGFAIIKCNDKKFNGTGPCTNVSTVQCTHGIKPVVSTQLLLNGSLAEEEVVIRSENFTDNAKTIIVQLKEPVVINCTRPSKTTRRRIHIGPGRAFYTTKQIAGDLRQAHCNINRARWNATLKQIVGKLRKQFVNKTIVFNRSSGGDPEIVMHSFNCGGEFFYCNSTQLFNSTWLSNSTWNDTEGSNNTGGNDTITLPCRIKQIINMWQEVGKAMYAPPIEGQIRCSSNITGLLLTRDGGDNQNETETFRPGGGNMRDNWRSELYKYKVVKIELLGVAPTKAKRRVVQREKRAVGIGAVFLGFLGAAGSTMGASMTLTVQARLLLSGIVQQQNNLLRAIEGQQHLLQLTVWGIKQLQARILAVERYLKDQQLLGIWGCSGKLICTTAVPWNASWSNKSLEEIWDNMTWMEWEREIDNYTSLIYTLIEESQNQQEKNEQELLGLDKWASLWNWFTITNWLWYIRIFIMIVGGLVGLRIVFTVLSIVNRVRQGYSPLSFQTRLPAPRGPDRPEGIEEEGGDRDRDRSGQLVDGLLAIIWVDLRSLCLFSYHRLRDLLLIVTRIVELLGRRGWEALKYWWNLLQYWSQELKNSAVSLFNAIAIAVAEGTDRVLKILQRAFRAILHIPTRIRQGLERALL</sequence>
<evidence type="ECO:0000255" key="1">
    <source>
        <dbReference type="HAMAP-Rule" id="MF_04083"/>
    </source>
</evidence>
<evidence type="ECO:0000256" key="2">
    <source>
        <dbReference type="SAM" id="MobiDB-lite"/>
    </source>
</evidence>
<evidence type="ECO:0007829" key="3">
    <source>
        <dbReference type="PDB" id="8TDX"/>
    </source>
</evidence>
<reference key="1">
    <citation type="journal article" date="1989" name="AIDS Res. Hum. Retroviruses">
        <title>Nucleotide sequences of gag and env genes of a Japanese isolate of HIV-1 and their expression in bacteria.</title>
        <authorList>
            <person name="Komiyama N."/>
            <person name="Hattori N."/>
            <person name="Inoue J."/>
            <person name="Sakuma S."/>
            <person name="Kurimura T."/>
            <person name="Yoshida M."/>
        </authorList>
    </citation>
    <scope>NUCLEOTIDE SEQUENCE [GENOMIC RNA]</scope>
</reference>
<reference key="2">
    <citation type="journal article" date="2003" name="APMIS">
        <title>Pathogens target DC-SIGN to influence their fate DC-SIGN functions as a pathogen receptor with broad specificity.</title>
        <authorList>
            <person name="Geijtenbeek T.B."/>
            <person name="van Kooyk Y."/>
        </authorList>
    </citation>
    <scope>REVIEW</scope>
</reference>
<reference key="3">
    <citation type="journal article" date="2003" name="Biochim. Biophys. Acta">
        <title>The HIV Env-mediated fusion reaction.</title>
        <authorList>
            <person name="Gallo S.A."/>
            <person name="Finnegan C.M."/>
            <person name="Viard M."/>
            <person name="Raviv Y."/>
            <person name="Dimitrov A."/>
            <person name="Rawat S.S."/>
            <person name="Puri A."/>
            <person name="Durell S."/>
            <person name="Blumenthal R."/>
        </authorList>
    </citation>
    <scope>REVIEW</scope>
</reference>
<reference key="4">
    <citation type="journal article" date="2005" name="Cell Death Differ.">
        <title>Mechanisms of apoptosis induction by the HIV-1 envelope.</title>
        <authorList>
            <person name="Perfettini J.-L."/>
            <person name="Castedo M."/>
            <person name="Roumier T."/>
            <person name="Andreau K."/>
            <person name="Nardacci R."/>
            <person name="Piacentini M."/>
            <person name="Kroemer G."/>
        </authorList>
    </citation>
    <scope>REVIEW</scope>
</reference>
<reference key="5">
    <citation type="journal article" date="2005" name="AIDS Res. Hum. Retroviruses">
        <title>V3: HIV's switch-hitter.</title>
        <authorList>
            <person name="Hartley O."/>
            <person name="Klasse P.J."/>
            <person name="Sattentau Q.J."/>
            <person name="Moore J.P."/>
        </authorList>
    </citation>
    <scope>REVIEW</scope>
</reference>
<reference key="6">
    <citation type="journal article" date="2005" name="Drugs">
        <title>Emerging drug targets for antiretroviral therapy.</title>
        <authorList>
            <person name="Reeves J.D."/>
            <person name="Piefer A.J."/>
        </authorList>
    </citation>
    <scope>REVIEW</scope>
</reference>
<reference key="7">
    <citation type="journal article" date="2006" name="EMBO J.">
        <title>HIV and the chemokine system: 10 years later.</title>
        <authorList>
            <person name="Lusso P."/>
        </authorList>
    </citation>
    <scope>REVIEW</scope>
</reference>
<dbReference type="EMBL" id="AH003604">
    <property type="protein sequence ID" value="AAB03526.1"/>
    <property type="molecule type" value="Genomic_RNA"/>
</dbReference>
<dbReference type="PDB" id="8TDX">
    <property type="method" value="X-ray"/>
    <property type="resolution" value="2.09 A"/>
    <property type="chains" value="E/F=524-531"/>
</dbReference>
<dbReference type="PDBsum" id="8TDX"/>
<dbReference type="SMR" id="P12489"/>
<dbReference type="GlyCosmos" id="P12489">
    <property type="glycosylation" value="30 sites, No reported glycans"/>
</dbReference>
<dbReference type="Reactome" id="R-HSA-5621480">
    <property type="pathway name" value="Dectin-2 family"/>
</dbReference>
<dbReference type="GO" id="GO:0044175">
    <property type="term" value="C:host cell endosome membrane"/>
    <property type="evidence" value="ECO:0007669"/>
    <property type="project" value="UniProtKB-SubCell"/>
</dbReference>
<dbReference type="GO" id="GO:0020002">
    <property type="term" value="C:host cell plasma membrane"/>
    <property type="evidence" value="ECO:0007669"/>
    <property type="project" value="UniProtKB-SubCell"/>
</dbReference>
<dbReference type="GO" id="GO:0016020">
    <property type="term" value="C:membrane"/>
    <property type="evidence" value="ECO:0007669"/>
    <property type="project" value="UniProtKB-UniRule"/>
</dbReference>
<dbReference type="GO" id="GO:0019031">
    <property type="term" value="C:viral envelope"/>
    <property type="evidence" value="ECO:0007669"/>
    <property type="project" value="UniProtKB-KW"/>
</dbReference>
<dbReference type="GO" id="GO:0055036">
    <property type="term" value="C:virion membrane"/>
    <property type="evidence" value="ECO:0007669"/>
    <property type="project" value="UniProtKB-SubCell"/>
</dbReference>
<dbReference type="GO" id="GO:0005198">
    <property type="term" value="F:structural molecule activity"/>
    <property type="evidence" value="ECO:0007669"/>
    <property type="project" value="UniProtKB-UniRule"/>
</dbReference>
<dbReference type="GO" id="GO:0075512">
    <property type="term" value="P:clathrin-dependent endocytosis of virus by host cell"/>
    <property type="evidence" value="ECO:0007669"/>
    <property type="project" value="UniProtKB-UniRule"/>
</dbReference>
<dbReference type="GO" id="GO:0039654">
    <property type="term" value="P:fusion of virus membrane with host endosome membrane"/>
    <property type="evidence" value="ECO:0007669"/>
    <property type="project" value="UniProtKB-UniRule"/>
</dbReference>
<dbReference type="GO" id="GO:0019064">
    <property type="term" value="P:fusion of virus membrane with host plasma membrane"/>
    <property type="evidence" value="ECO:0007669"/>
    <property type="project" value="UniProtKB-UniRule"/>
</dbReference>
<dbReference type="GO" id="GO:1903908">
    <property type="term" value="P:positive regulation of plasma membrane raft polarization"/>
    <property type="evidence" value="ECO:0007669"/>
    <property type="project" value="UniProtKB-UniRule"/>
</dbReference>
<dbReference type="GO" id="GO:1903911">
    <property type="term" value="P:positive regulation of receptor clustering"/>
    <property type="evidence" value="ECO:0007669"/>
    <property type="project" value="UniProtKB-UniRule"/>
</dbReference>
<dbReference type="GO" id="GO:0019082">
    <property type="term" value="P:viral protein processing"/>
    <property type="evidence" value="ECO:0007669"/>
    <property type="project" value="UniProtKB-UniRule"/>
</dbReference>
<dbReference type="GO" id="GO:0019062">
    <property type="term" value="P:virion attachment to host cell"/>
    <property type="evidence" value="ECO:0007669"/>
    <property type="project" value="UniProtKB-UniRule"/>
</dbReference>
<dbReference type="CDD" id="cd09909">
    <property type="entry name" value="HIV-1-like_HR1-HR2"/>
    <property type="match status" value="1"/>
</dbReference>
<dbReference type="FunFam" id="1.10.287.210:FF:000001">
    <property type="entry name" value="Envelope glycoprotein gp160"/>
    <property type="match status" value="1"/>
</dbReference>
<dbReference type="FunFam" id="1.20.5.490:FF:000001">
    <property type="entry name" value="Envelope glycoprotein gp160"/>
    <property type="match status" value="1"/>
</dbReference>
<dbReference type="FunFam" id="2.170.40.20:FF:000001">
    <property type="entry name" value="Envelope glycoprotein gp160"/>
    <property type="match status" value="1"/>
</dbReference>
<dbReference type="FunFam" id="2.170.40.20:FF:000003">
    <property type="entry name" value="Envelope glycoprotein gp160"/>
    <property type="match status" value="1"/>
</dbReference>
<dbReference type="Gene3D" id="1.10.287.210">
    <property type="match status" value="1"/>
</dbReference>
<dbReference type="Gene3D" id="2.170.40.20">
    <property type="entry name" value="Human immunodeficiency virus 1, Gp160, envelope glycoprotein"/>
    <property type="match status" value="2"/>
</dbReference>
<dbReference type="Gene3D" id="1.20.5.490">
    <property type="entry name" value="Single helix bin"/>
    <property type="match status" value="1"/>
</dbReference>
<dbReference type="HAMAP" id="MF_04083">
    <property type="entry name" value="HIV_ENV"/>
    <property type="match status" value="1"/>
</dbReference>
<dbReference type="InterPro" id="IPR036377">
    <property type="entry name" value="Gp120_core_sf"/>
</dbReference>
<dbReference type="InterPro" id="IPR037527">
    <property type="entry name" value="Gp160"/>
</dbReference>
<dbReference type="InterPro" id="IPR000328">
    <property type="entry name" value="GP41-like"/>
</dbReference>
<dbReference type="InterPro" id="IPR000777">
    <property type="entry name" value="HIV1_Gp120"/>
</dbReference>
<dbReference type="Pfam" id="PF00516">
    <property type="entry name" value="GP120"/>
    <property type="match status" value="1"/>
</dbReference>
<dbReference type="Pfam" id="PF00517">
    <property type="entry name" value="GP41"/>
    <property type="match status" value="1"/>
</dbReference>
<dbReference type="SUPFAM" id="SSF56502">
    <property type="entry name" value="gp120 core"/>
    <property type="match status" value="2"/>
</dbReference>
<dbReference type="SUPFAM" id="SSF58069">
    <property type="entry name" value="Virus ectodomain"/>
    <property type="match status" value="1"/>
</dbReference>
<feature type="signal peptide" evidence="1">
    <location>
        <begin position="1"/>
        <end position="31"/>
    </location>
</feature>
<feature type="chain" id="PRO_0000239482" description="Envelope glycoprotein gp160" evidence="1">
    <location>
        <begin position="32"/>
        <end position="867"/>
    </location>
</feature>
<feature type="chain" id="PRO_0000038404" description="Surface protein gp120" evidence="1">
    <location>
        <begin position="32"/>
        <end position="523"/>
    </location>
</feature>
<feature type="chain" id="PRO_0000038405" description="Transmembrane protein gp41" evidence="1">
    <location>
        <begin position="524"/>
        <end position="867"/>
    </location>
</feature>
<feature type="topological domain" description="Extracellular" evidence="1">
    <location>
        <begin position="32"/>
        <end position="695"/>
    </location>
</feature>
<feature type="transmembrane region" description="Helical" evidence="1">
    <location>
        <begin position="696"/>
        <end position="716"/>
    </location>
</feature>
<feature type="topological domain" description="Cytoplasmic" evidence="1">
    <location>
        <begin position="717"/>
        <end position="867"/>
    </location>
</feature>
<feature type="region of interest" description="V1" evidence="1">
    <location>
        <begin position="130"/>
        <end position="159"/>
    </location>
</feature>
<feature type="region of interest" description="V2" evidence="1">
    <location>
        <begin position="160"/>
        <end position="208"/>
    </location>
</feature>
<feature type="region of interest" description="V3" evidence="1">
    <location>
        <begin position="308"/>
        <end position="341"/>
    </location>
</feature>
<feature type="region of interest" description="CD4-binding loop" evidence="1">
    <location>
        <begin position="374"/>
        <end position="384"/>
    </location>
</feature>
<feature type="region of interest" description="V4" evidence="1">
    <location>
        <begin position="395"/>
        <end position="430"/>
    </location>
</feature>
<feature type="region of interest" description="V5">
    <location>
        <begin position="473"/>
        <end position="483"/>
    </location>
</feature>
<feature type="region of interest" description="V5" evidence="1">
    <location>
        <begin position="475"/>
        <end position="483"/>
    </location>
</feature>
<feature type="region of interest" description="Fusion peptide" evidence="1">
    <location>
        <begin position="524"/>
        <end position="544"/>
    </location>
</feature>
<feature type="region of interest" description="Immunosuppression" evidence="1">
    <location>
        <begin position="585"/>
        <end position="603"/>
    </location>
</feature>
<feature type="region of interest" description="MPER; binding to GalCer" evidence="1">
    <location>
        <begin position="673"/>
        <end position="694"/>
    </location>
</feature>
<feature type="region of interest" description="Disordered" evidence="2">
    <location>
        <begin position="730"/>
        <end position="755"/>
    </location>
</feature>
<feature type="coiled-coil region" evidence="1">
    <location>
        <begin position="644"/>
        <end position="678"/>
    </location>
</feature>
<feature type="short sequence motif" description="YXXL motif; contains endocytosis signal" evidence="1">
    <location>
        <begin position="723"/>
        <end position="726"/>
    </location>
</feature>
<feature type="short sequence motif" description="Di-leucine internalization motif" evidence="1">
    <location>
        <begin position="866"/>
        <end position="867"/>
    </location>
</feature>
<feature type="site" description="Cleavage; by host furin" evidence="1">
    <location>
        <begin position="523"/>
        <end position="524"/>
    </location>
</feature>
<feature type="lipid moiety-binding region" description="S-palmitoyl cysteine; by host" evidence="1">
    <location>
        <position position="775"/>
    </location>
</feature>
<feature type="glycosylation site" description="N-linked (GlcNAc...) asparagine; by host" evidence="1">
    <location>
        <position position="87"/>
    </location>
</feature>
<feature type="glycosylation site" description="N-linked (GlcNAc...) asparagine; by host" evidence="1">
    <location>
        <position position="135"/>
    </location>
</feature>
<feature type="glycosylation site" description="N-linked (GlcNAc...) asparagine; by host" evidence="1">
    <location>
        <position position="140"/>
    </location>
</feature>
<feature type="glycosylation site" description="N-linked (GlcNAc...) asparagine; by host" evidence="1">
    <location>
        <position position="143"/>
    </location>
</feature>
<feature type="glycosylation site" description="N-linked (GlcNAc...) asparagine; by host" evidence="1">
    <location>
        <position position="159"/>
    </location>
</feature>
<feature type="glycosylation site" description="N-linked (GlcNAc...) asparagine; by host" evidence="1">
    <location>
        <position position="163"/>
    </location>
</feature>
<feature type="glycosylation site" description="N-linked (GlcNAc...) asparagine; by host" evidence="1">
    <location>
        <position position="188"/>
    </location>
</feature>
<feature type="glycosylation site" description="N-linked (GlcNAc...) asparagine; by host" evidence="1">
    <location>
        <position position="189"/>
    </location>
</feature>
<feature type="glycosylation site" description="N-linked (GlcNAc...) asparagine; by host" evidence="1">
    <location>
        <position position="199"/>
    </location>
</feature>
<feature type="glycosylation site" description="N-linked (GlcNAc...) asparagine; by host" evidence="1">
    <location>
        <position position="209"/>
    </location>
</feature>
<feature type="glycosylation site" description="N-linked (GlcNAc...) asparagine; by host" evidence="1">
    <location>
        <position position="246"/>
    </location>
</feature>
<feature type="glycosylation site" description="N-linked (GlcNAc...) asparagine; by host" evidence="1">
    <location>
        <position position="253"/>
    </location>
</feature>
<feature type="glycosylation site" description="N-linked (GlcNAc...) asparagine; by host" evidence="1">
    <location>
        <position position="274"/>
    </location>
</feature>
<feature type="glycosylation site" description="N-linked (GlcNAc...) asparagine; by host" evidence="1">
    <location>
        <position position="288"/>
    </location>
</feature>
<feature type="glycosylation site" description="N-linked (GlcNAc...) asparagine; by host" evidence="1">
    <location>
        <position position="307"/>
    </location>
</feature>
<feature type="glycosylation site" description="N-linked (GlcNAc...) asparagine; by host" evidence="1">
    <location>
        <position position="350"/>
    </location>
</feature>
<feature type="glycosylation site" description="N-linked (GlcNAc...) asparagine; by host" evidence="1">
    <location>
        <position position="366"/>
    </location>
</feature>
<feature type="glycosylation site" description="N-linked (GlcNAc...) asparagine; by host" evidence="1">
    <location>
        <position position="372"/>
    </location>
</feature>
<feature type="glycosylation site" description="N-linked (GlcNAc...) asparagine; by host" evidence="1">
    <location>
        <position position="396"/>
    </location>
</feature>
<feature type="glycosylation site" description="N-linked (GlcNAc...) asparagine; by host" evidence="1">
    <location>
        <position position="402"/>
    </location>
</feature>
<feature type="glycosylation site" description="N-linked (GlcNAc...) asparagine; by host" evidence="1">
    <location>
        <position position="408"/>
    </location>
</feature>
<feature type="glycosylation site" description="N-linked (GlcNAc...) asparagine; by host" evidence="1">
    <location>
        <position position="412"/>
    </location>
</feature>
<feature type="glycosylation site" description="N-linked (GlcNAc...) asparagine; by host" evidence="1">
    <location>
        <position position="418"/>
    </location>
</feature>
<feature type="glycosylation site" description="N-linked (GlcNAc...) asparagine; by host" evidence="1">
    <location>
        <position position="423"/>
    </location>
</feature>
<feature type="glycosylation site" description="N-linked (GlcNAc...) asparagine; by host" evidence="1">
    <location>
        <position position="460"/>
    </location>
</feature>
<feature type="glycosylation site" description="N-linked (GlcNAc...) asparagine; by host" evidence="1">
    <location>
        <position position="475"/>
    </location>
</feature>
<feature type="glycosylation site" description="N-linked (GlcNAc...) asparagine; by host" evidence="1">
    <location>
        <position position="622"/>
    </location>
</feature>
<feature type="glycosylation site" description="N-linked (GlcNAc...) asparagine; by host" evidence="1">
    <location>
        <position position="627"/>
    </location>
</feature>
<feature type="glycosylation site" description="N-linked (GlcNAc...) asparagine; by host" evidence="1">
    <location>
        <position position="636"/>
    </location>
</feature>
<feature type="glycosylation site" description="N-linked (GlcNAc...) asparagine; by host" evidence="1">
    <location>
        <position position="648"/>
    </location>
</feature>
<feature type="disulfide bond" evidence="1">
    <location>
        <begin position="53"/>
        <end position="73"/>
    </location>
</feature>
<feature type="disulfide bond" evidence="1">
    <location>
        <begin position="118"/>
        <end position="217"/>
    </location>
</feature>
<feature type="disulfide bond" evidence="1">
    <location>
        <begin position="125"/>
        <end position="208"/>
    </location>
</feature>
<feature type="disulfide bond" evidence="1">
    <location>
        <begin position="130"/>
        <end position="160"/>
    </location>
</feature>
<feature type="disulfide bond" evidence="1">
    <location>
        <begin position="230"/>
        <end position="259"/>
    </location>
</feature>
<feature type="disulfide bond" evidence="1">
    <location>
        <begin position="240"/>
        <end position="251"/>
    </location>
</feature>
<feature type="disulfide bond" evidence="1">
    <location>
        <begin position="308"/>
        <end position="342"/>
    </location>
</feature>
<feature type="disulfide bond" evidence="1">
    <location>
        <begin position="388"/>
        <end position="457"/>
    </location>
</feature>
<feature type="disulfide bond" evidence="1">
    <location>
        <begin position="395"/>
        <end position="430"/>
    </location>
</feature>
<feature type="disulfide bond" evidence="1">
    <location>
        <begin position="609"/>
        <end position="615"/>
    </location>
</feature>
<feature type="strand" evidence="3">
    <location>
        <begin position="528"/>
        <end position="531"/>
    </location>
</feature>
<proteinExistence type="evidence at protein level"/>